<sequence>MPQLSRYSDEHVEQLLSELLSVLEKHKAPTDLSLMVLGNMVTNLINTSVAPAQRQAIANSFARALQSSISEDNAH</sequence>
<protein>
    <recommendedName>
        <fullName evidence="1">UPF0352 protein YejL</fullName>
    </recommendedName>
</protein>
<organism>
    <name type="scientific">Salmonella gallinarum (strain 287/91 / NCTC 13346)</name>
    <dbReference type="NCBI Taxonomy" id="550538"/>
    <lineage>
        <taxon>Bacteria</taxon>
        <taxon>Pseudomonadati</taxon>
        <taxon>Pseudomonadota</taxon>
        <taxon>Gammaproteobacteria</taxon>
        <taxon>Enterobacterales</taxon>
        <taxon>Enterobacteriaceae</taxon>
        <taxon>Salmonella</taxon>
    </lineage>
</organism>
<comment type="similarity">
    <text evidence="1">Belongs to the UPF0352 family.</text>
</comment>
<dbReference type="EMBL" id="AM933173">
    <property type="protein sequence ID" value="CAR38098.1"/>
    <property type="molecule type" value="Genomic_DNA"/>
</dbReference>
<dbReference type="RefSeq" id="WP_001135904.1">
    <property type="nucleotide sequence ID" value="NC_011274.1"/>
</dbReference>
<dbReference type="SMR" id="B5RC66"/>
<dbReference type="KEGG" id="seg:SG2265"/>
<dbReference type="HOGENOM" id="CLU_175457_0_0_6"/>
<dbReference type="Proteomes" id="UP000008321">
    <property type="component" value="Chromosome"/>
</dbReference>
<dbReference type="Gene3D" id="1.10.3390.10">
    <property type="entry name" value="YejL-like"/>
    <property type="match status" value="1"/>
</dbReference>
<dbReference type="HAMAP" id="MF_00816">
    <property type="entry name" value="UPF0352"/>
    <property type="match status" value="1"/>
</dbReference>
<dbReference type="InterPro" id="IPR009857">
    <property type="entry name" value="UPF0352"/>
</dbReference>
<dbReference type="InterPro" id="IPR023202">
    <property type="entry name" value="YejL_sf"/>
</dbReference>
<dbReference type="NCBIfam" id="NF010242">
    <property type="entry name" value="PRK13689.1"/>
    <property type="match status" value="1"/>
</dbReference>
<dbReference type="Pfam" id="PF07208">
    <property type="entry name" value="DUF1414"/>
    <property type="match status" value="1"/>
</dbReference>
<dbReference type="PIRSF" id="PIRSF006188">
    <property type="entry name" value="UCP006188"/>
    <property type="match status" value="1"/>
</dbReference>
<dbReference type="SUPFAM" id="SSF158651">
    <property type="entry name" value="YejL-like"/>
    <property type="match status" value="1"/>
</dbReference>
<name>YEJL_SALG2</name>
<proteinExistence type="inferred from homology"/>
<evidence type="ECO:0000255" key="1">
    <source>
        <dbReference type="HAMAP-Rule" id="MF_00816"/>
    </source>
</evidence>
<gene>
    <name evidence="1" type="primary">yejL</name>
    <name type="ordered locus">SG2265</name>
</gene>
<accession>B5RC66</accession>
<reference key="1">
    <citation type="journal article" date="2008" name="Genome Res.">
        <title>Comparative genome analysis of Salmonella enteritidis PT4 and Salmonella gallinarum 287/91 provides insights into evolutionary and host adaptation pathways.</title>
        <authorList>
            <person name="Thomson N.R."/>
            <person name="Clayton D.J."/>
            <person name="Windhorst D."/>
            <person name="Vernikos G."/>
            <person name="Davidson S."/>
            <person name="Churcher C."/>
            <person name="Quail M.A."/>
            <person name="Stevens M."/>
            <person name="Jones M.A."/>
            <person name="Watson M."/>
            <person name="Barron A."/>
            <person name="Layton A."/>
            <person name="Pickard D."/>
            <person name="Kingsley R.A."/>
            <person name="Bignell A."/>
            <person name="Clark L."/>
            <person name="Harris B."/>
            <person name="Ormond D."/>
            <person name="Abdellah Z."/>
            <person name="Brooks K."/>
            <person name="Cherevach I."/>
            <person name="Chillingworth T."/>
            <person name="Woodward J."/>
            <person name="Norberczak H."/>
            <person name="Lord A."/>
            <person name="Arrowsmith C."/>
            <person name="Jagels K."/>
            <person name="Moule S."/>
            <person name="Mungall K."/>
            <person name="Saunders M."/>
            <person name="Whitehead S."/>
            <person name="Chabalgoity J.A."/>
            <person name="Maskell D."/>
            <person name="Humphreys T."/>
            <person name="Roberts M."/>
            <person name="Barrow P.A."/>
            <person name="Dougan G."/>
            <person name="Parkhill J."/>
        </authorList>
    </citation>
    <scope>NUCLEOTIDE SEQUENCE [LARGE SCALE GENOMIC DNA]</scope>
    <source>
        <strain>287/91 / NCTC 13346</strain>
    </source>
</reference>
<feature type="chain" id="PRO_1000199596" description="UPF0352 protein YejL">
    <location>
        <begin position="1"/>
        <end position="75"/>
    </location>
</feature>